<dbReference type="EMBL" id="X83690">
    <property type="protein sequence ID" value="CAA58662.1"/>
    <property type="molecule type" value="Genomic_DNA"/>
</dbReference>
<dbReference type="EMBL" id="Z72700">
    <property type="protein sequence ID" value="CAA96890.1"/>
    <property type="molecule type" value="Genomic_DNA"/>
</dbReference>
<dbReference type="PIR" id="S57255">
    <property type="entry name" value="S57255"/>
</dbReference>
<dbReference type="DIP" id="DIP-7762N"/>
<dbReference type="IntAct" id="P53105">
    <property type="interactions" value="1"/>
</dbReference>
<dbReference type="STRING" id="4932.YGL177W"/>
<dbReference type="PaxDb" id="4932-YGL177W"/>
<dbReference type="EnsemblFungi" id="YGL177W_mRNA">
    <property type="protein sequence ID" value="YGL177W"/>
    <property type="gene ID" value="YGL177W"/>
</dbReference>
<dbReference type="AGR" id="SGD:S000003145"/>
<dbReference type="SGD" id="S000003145">
    <property type="gene designation" value="YGL177W"/>
</dbReference>
<dbReference type="HOGENOM" id="CLU_2374386_0_0_1"/>
<sequence length="115" mass="13679">MPIRIFSKEGLRERGASGKNEQKKKKKEKIRRSMKNLCRFVESYKDFTLYGYRFHSKIKHKFCVLSSSFPVLFFCHPLSPLKSNFIDRFTLDSHASQATWTLYMVVIVLFLSYRN</sequence>
<proteinExistence type="uncertain"/>
<reference key="1">
    <citation type="journal article" date="1995" name="Yeast">
        <title>The DNA sequence of a 7941 bp fragment of the left arm of chromosome VII of Saccharomyces cerevisiae contains four open reading frames including the multicopy suppressor gene of the pop2 mutation and a putative serine/threonine protein kinase gene.</title>
        <authorList>
            <person name="Coglievina M."/>
            <person name="Bertani I."/>
            <person name="Klima R."/>
            <person name="Zaccaria P."/>
            <person name="Bruschi C.V."/>
        </authorList>
    </citation>
    <scope>NUCLEOTIDE SEQUENCE [GENOMIC DNA]</scope>
    <source>
        <strain>ATCC 96604 / S288c / FY1679</strain>
    </source>
</reference>
<reference key="2">
    <citation type="journal article" date="1997" name="Nature">
        <title>The nucleotide sequence of Saccharomyces cerevisiae chromosome VII.</title>
        <authorList>
            <person name="Tettelin H."/>
            <person name="Agostoni-Carbone M.L."/>
            <person name="Albermann K."/>
            <person name="Albers M."/>
            <person name="Arroyo J."/>
            <person name="Backes U."/>
            <person name="Barreiros T."/>
            <person name="Bertani I."/>
            <person name="Bjourson A.J."/>
            <person name="Brueckner M."/>
            <person name="Bruschi C.V."/>
            <person name="Carignani G."/>
            <person name="Castagnoli L."/>
            <person name="Cerdan E."/>
            <person name="Clemente M.L."/>
            <person name="Coblenz A."/>
            <person name="Coglievina M."/>
            <person name="Coissac E."/>
            <person name="Defoor E."/>
            <person name="Del Bino S."/>
            <person name="Delius H."/>
            <person name="Delneri D."/>
            <person name="de Wergifosse P."/>
            <person name="Dujon B."/>
            <person name="Durand P."/>
            <person name="Entian K.-D."/>
            <person name="Eraso P."/>
            <person name="Escribano V."/>
            <person name="Fabiani L."/>
            <person name="Fartmann B."/>
            <person name="Feroli F."/>
            <person name="Feuermann M."/>
            <person name="Frontali L."/>
            <person name="Garcia-Gonzalez M."/>
            <person name="Garcia-Saez M.I."/>
            <person name="Goffeau A."/>
            <person name="Guerreiro P."/>
            <person name="Hani J."/>
            <person name="Hansen M."/>
            <person name="Hebling U."/>
            <person name="Hernandez K."/>
            <person name="Heumann K."/>
            <person name="Hilger F."/>
            <person name="Hofmann B."/>
            <person name="Indge K.J."/>
            <person name="James C.M."/>
            <person name="Klima R."/>
            <person name="Koetter P."/>
            <person name="Kramer B."/>
            <person name="Kramer W."/>
            <person name="Lauquin G."/>
            <person name="Leuther H."/>
            <person name="Louis E.J."/>
            <person name="Maillier E."/>
            <person name="Marconi A."/>
            <person name="Martegani E."/>
            <person name="Mazon M.J."/>
            <person name="Mazzoni C."/>
            <person name="McReynolds A.D.K."/>
            <person name="Melchioretto P."/>
            <person name="Mewes H.-W."/>
            <person name="Minenkova O."/>
            <person name="Mueller-Auer S."/>
            <person name="Nawrocki A."/>
            <person name="Netter P."/>
            <person name="Neu R."/>
            <person name="Nombela C."/>
            <person name="Oliver S.G."/>
            <person name="Panzeri L."/>
            <person name="Paoluzi S."/>
            <person name="Plevani P."/>
            <person name="Portetelle D."/>
            <person name="Portillo F."/>
            <person name="Potier S."/>
            <person name="Purnelle B."/>
            <person name="Rieger M."/>
            <person name="Riles L."/>
            <person name="Rinaldi T."/>
            <person name="Robben J."/>
            <person name="Rodrigues-Pousada C."/>
            <person name="Rodriguez-Belmonte E."/>
            <person name="Rodriguez-Torres A.M."/>
            <person name="Rose M."/>
            <person name="Ruzzi M."/>
            <person name="Saliola M."/>
            <person name="Sanchez-Perez M."/>
            <person name="Schaefer B."/>
            <person name="Schaefer M."/>
            <person name="Scharfe M."/>
            <person name="Schmidheini T."/>
            <person name="Schreer A."/>
            <person name="Skala J."/>
            <person name="Souciet J.-L."/>
            <person name="Steensma H.Y."/>
            <person name="Talla E."/>
            <person name="Thierry A."/>
            <person name="Vandenbol M."/>
            <person name="van der Aart Q.J.M."/>
            <person name="Van Dyck L."/>
            <person name="Vanoni M."/>
            <person name="Verhasselt P."/>
            <person name="Voet M."/>
            <person name="Volckaert G."/>
            <person name="Wambutt R."/>
            <person name="Watson M.D."/>
            <person name="Weber N."/>
            <person name="Wedler E."/>
            <person name="Wedler H."/>
            <person name="Wipfli P."/>
            <person name="Wolf K."/>
            <person name="Wright L.F."/>
            <person name="Zaccaria P."/>
            <person name="Zimmermann M."/>
            <person name="Zollner A."/>
            <person name="Kleine K."/>
        </authorList>
    </citation>
    <scope>NUCLEOTIDE SEQUENCE [LARGE SCALE GENOMIC DNA]</scope>
    <source>
        <strain>ATCC 204508 / S288c</strain>
    </source>
</reference>
<reference key="3">
    <citation type="journal article" date="2014" name="G3 (Bethesda)">
        <title>The reference genome sequence of Saccharomyces cerevisiae: Then and now.</title>
        <authorList>
            <person name="Engel S.R."/>
            <person name="Dietrich F.S."/>
            <person name="Fisk D.G."/>
            <person name="Binkley G."/>
            <person name="Balakrishnan R."/>
            <person name="Costanzo M.C."/>
            <person name="Dwight S.S."/>
            <person name="Hitz B.C."/>
            <person name="Karra K."/>
            <person name="Nash R.S."/>
            <person name="Weng S."/>
            <person name="Wong E.D."/>
            <person name="Lloyd P."/>
            <person name="Skrzypek M.S."/>
            <person name="Miyasato S.R."/>
            <person name="Simison M."/>
            <person name="Cherry J.M."/>
        </authorList>
    </citation>
    <scope>GENOME REANNOTATION</scope>
    <source>
        <strain>ATCC 204508 / S288c</strain>
    </source>
</reference>
<evidence type="ECO:0000256" key="1">
    <source>
        <dbReference type="SAM" id="MobiDB-lite"/>
    </source>
</evidence>
<evidence type="ECO:0000305" key="2"/>
<evidence type="ECO:0000305" key="3">
    <source>
    </source>
</evidence>
<gene>
    <name type="ordered locus">YGL177W</name>
    <name type="ORF">BIB115</name>
</gene>
<feature type="chain" id="PRO_0000202726" description="Putative uncharacterized protein YGL177W">
    <location>
        <begin position="1"/>
        <end position="115"/>
    </location>
</feature>
<feature type="region of interest" description="Disordered" evidence="1">
    <location>
        <begin position="9"/>
        <end position="30"/>
    </location>
</feature>
<accession>P53105</accession>
<organism>
    <name type="scientific">Saccharomyces cerevisiae (strain ATCC 204508 / S288c)</name>
    <name type="common">Baker's yeast</name>
    <dbReference type="NCBI Taxonomy" id="559292"/>
    <lineage>
        <taxon>Eukaryota</taxon>
        <taxon>Fungi</taxon>
        <taxon>Dikarya</taxon>
        <taxon>Ascomycota</taxon>
        <taxon>Saccharomycotina</taxon>
        <taxon>Saccharomycetes</taxon>
        <taxon>Saccharomycetales</taxon>
        <taxon>Saccharomycetaceae</taxon>
        <taxon>Saccharomyces</taxon>
    </lineage>
</organism>
<name>YGS7_YEAST</name>
<protein>
    <recommendedName>
        <fullName>Putative uncharacterized protein YGL177W</fullName>
    </recommendedName>
</protein>
<comment type="miscellaneous">
    <text evidence="2">Encoded in the first intron of MPT5.</text>
</comment>
<comment type="caution">
    <text evidence="3">Product of a dubious gene prediction unlikely to encode a functional protein. Because of that it is not part of the S.cerevisiae S288c complete/reference proteome set.</text>
</comment>